<reference key="1">
    <citation type="submission" date="2006-10" db="EMBL/GenBank/DDBJ databases">
        <authorList>
            <person name="Fleischmann R.D."/>
            <person name="Dodson R.J."/>
            <person name="Haft D.H."/>
            <person name="Merkel J.S."/>
            <person name="Nelson W.C."/>
            <person name="Fraser C.M."/>
        </authorList>
    </citation>
    <scope>NUCLEOTIDE SEQUENCE [LARGE SCALE GENOMIC DNA]</scope>
    <source>
        <strain>ATCC 700084 / mc(2)155</strain>
    </source>
</reference>
<reference key="2">
    <citation type="journal article" date="2007" name="Genome Biol.">
        <title>Interrupted coding sequences in Mycobacterium smegmatis: authentic mutations or sequencing errors?</title>
        <authorList>
            <person name="Deshayes C."/>
            <person name="Perrodou E."/>
            <person name="Gallien S."/>
            <person name="Euphrasie D."/>
            <person name="Schaeffer C."/>
            <person name="Van-Dorsselaer A."/>
            <person name="Poch O."/>
            <person name="Lecompte O."/>
            <person name="Reyrat J.-M."/>
        </authorList>
    </citation>
    <scope>NUCLEOTIDE SEQUENCE [LARGE SCALE GENOMIC DNA]</scope>
    <source>
        <strain>ATCC 700084 / mc(2)155</strain>
    </source>
</reference>
<reference key="3">
    <citation type="journal article" date="2009" name="Genome Res.">
        <title>Ortho-proteogenomics: multiple proteomes investigation through orthology and a new MS-based protocol.</title>
        <authorList>
            <person name="Gallien S."/>
            <person name="Perrodou E."/>
            <person name="Carapito C."/>
            <person name="Deshayes C."/>
            <person name="Reyrat J.-M."/>
            <person name="Van Dorsselaer A."/>
            <person name="Poch O."/>
            <person name="Schaeffer C."/>
            <person name="Lecompte O."/>
        </authorList>
    </citation>
    <scope>NUCLEOTIDE SEQUENCE [LARGE SCALE GENOMIC DNA]</scope>
    <source>
        <strain>ATCC 700084 / mc(2)155</strain>
    </source>
</reference>
<proteinExistence type="inferred from homology"/>
<sequence length="354" mass="37167">MMYRVLRRALFLAPAERVHVWVFALLRAVTWAAPLRAALARLLAPRDPILASTVFGVHFPGPLGLAAGFDKNGRGLAAWGALGFGYAEVGTVTAQPQPGNPAPRLFRLPDDHALLNRMGFNNEGAGALAQRLTRGKSDIPIGVNIGKTKVTPAEEAVADYVTSARLLNSLASFVVVNVSSPNTPGLRDLQAVAALRPILAAVKAETTKPVLVKIAPDLSDSDIDEIADLAVELGLAGIVATNTTVSRDGLLTPGVADLGPGGISGRPVARRSAEVLRRLYRRVGDKLVLISVGGIETADDAWERIVSGASLLQGYTGFIYGGGLWAKHIHDGIAGRLRACGFTTLSEAVGSAVR</sequence>
<organism>
    <name type="scientific">Mycolicibacterium smegmatis (strain ATCC 700084 / mc(2)155)</name>
    <name type="common">Mycobacterium smegmatis</name>
    <dbReference type="NCBI Taxonomy" id="246196"/>
    <lineage>
        <taxon>Bacteria</taxon>
        <taxon>Bacillati</taxon>
        <taxon>Actinomycetota</taxon>
        <taxon>Actinomycetes</taxon>
        <taxon>Mycobacteriales</taxon>
        <taxon>Mycobacteriaceae</taxon>
        <taxon>Mycolicibacterium</taxon>
    </lineage>
</organism>
<keyword id="KW-1003">Cell membrane</keyword>
<keyword id="KW-0285">Flavoprotein</keyword>
<keyword id="KW-0288">FMN</keyword>
<keyword id="KW-0472">Membrane</keyword>
<keyword id="KW-0560">Oxidoreductase</keyword>
<keyword id="KW-0665">Pyrimidine biosynthesis</keyword>
<keyword id="KW-1185">Reference proteome</keyword>
<name>PYRD_MYCS2</name>
<accession>A0QZY9</accession>
<accession>I7FPB7</accession>
<dbReference type="EC" id="1.3.5.2" evidence="1"/>
<dbReference type="EMBL" id="CP000480">
    <property type="protein sequence ID" value="ABK69985.1"/>
    <property type="molecule type" value="Genomic_DNA"/>
</dbReference>
<dbReference type="EMBL" id="CP001663">
    <property type="protein sequence ID" value="AFP40558.1"/>
    <property type="status" value="ALT_INIT"/>
    <property type="molecule type" value="Genomic_DNA"/>
</dbReference>
<dbReference type="RefSeq" id="YP_888477.1">
    <property type="nucleotide sequence ID" value="NC_008596.1"/>
</dbReference>
<dbReference type="SMR" id="A0QZY9"/>
<dbReference type="STRING" id="246196.MSMEG_4198"/>
<dbReference type="PaxDb" id="246196-MSMEI_4100"/>
<dbReference type="KEGG" id="msg:MSMEI_4100"/>
<dbReference type="KEGG" id="msm:MSMEG_4198"/>
<dbReference type="PATRIC" id="fig|246196.19.peg.4119"/>
<dbReference type="eggNOG" id="COG0167">
    <property type="taxonomic scope" value="Bacteria"/>
</dbReference>
<dbReference type="OrthoDB" id="9802377at2"/>
<dbReference type="UniPathway" id="UPA00070">
    <property type="reaction ID" value="UER00946"/>
</dbReference>
<dbReference type="Proteomes" id="UP000000757">
    <property type="component" value="Chromosome"/>
</dbReference>
<dbReference type="Proteomes" id="UP000006158">
    <property type="component" value="Chromosome"/>
</dbReference>
<dbReference type="GO" id="GO:0005737">
    <property type="term" value="C:cytoplasm"/>
    <property type="evidence" value="ECO:0007669"/>
    <property type="project" value="InterPro"/>
</dbReference>
<dbReference type="GO" id="GO:0005886">
    <property type="term" value="C:plasma membrane"/>
    <property type="evidence" value="ECO:0007669"/>
    <property type="project" value="UniProtKB-SubCell"/>
</dbReference>
<dbReference type="GO" id="GO:0106430">
    <property type="term" value="F:dihydroorotate dehydrogenase (quinone) activity"/>
    <property type="evidence" value="ECO:0007669"/>
    <property type="project" value="UniProtKB-EC"/>
</dbReference>
<dbReference type="GO" id="GO:0006207">
    <property type="term" value="P:'de novo' pyrimidine nucleobase biosynthetic process"/>
    <property type="evidence" value="ECO:0007669"/>
    <property type="project" value="InterPro"/>
</dbReference>
<dbReference type="GO" id="GO:0044205">
    <property type="term" value="P:'de novo' UMP biosynthetic process"/>
    <property type="evidence" value="ECO:0007669"/>
    <property type="project" value="UniProtKB-UniRule"/>
</dbReference>
<dbReference type="CDD" id="cd04738">
    <property type="entry name" value="DHOD_2_like"/>
    <property type="match status" value="1"/>
</dbReference>
<dbReference type="FunFam" id="3.20.20.70:FF:000123">
    <property type="entry name" value="Dihydroorotate dehydrogenase (quinone)"/>
    <property type="match status" value="1"/>
</dbReference>
<dbReference type="Gene3D" id="3.20.20.70">
    <property type="entry name" value="Aldolase class I"/>
    <property type="match status" value="1"/>
</dbReference>
<dbReference type="HAMAP" id="MF_00225">
    <property type="entry name" value="DHO_dh_type2"/>
    <property type="match status" value="1"/>
</dbReference>
<dbReference type="InterPro" id="IPR013785">
    <property type="entry name" value="Aldolase_TIM"/>
</dbReference>
<dbReference type="InterPro" id="IPR050074">
    <property type="entry name" value="DHO_dehydrogenase"/>
</dbReference>
<dbReference type="InterPro" id="IPR012135">
    <property type="entry name" value="Dihydroorotate_DH_1_2"/>
</dbReference>
<dbReference type="InterPro" id="IPR005719">
    <property type="entry name" value="Dihydroorotate_DH_2"/>
</dbReference>
<dbReference type="InterPro" id="IPR005720">
    <property type="entry name" value="Dihydroorotate_DH_cat"/>
</dbReference>
<dbReference type="InterPro" id="IPR001295">
    <property type="entry name" value="Dihydroorotate_DH_CS"/>
</dbReference>
<dbReference type="NCBIfam" id="NF003648">
    <property type="entry name" value="PRK05286.2-1"/>
    <property type="match status" value="1"/>
</dbReference>
<dbReference type="NCBIfam" id="NF003652">
    <property type="entry name" value="PRK05286.2-5"/>
    <property type="match status" value="1"/>
</dbReference>
<dbReference type="NCBIfam" id="TIGR01036">
    <property type="entry name" value="pyrD_sub2"/>
    <property type="match status" value="1"/>
</dbReference>
<dbReference type="PANTHER" id="PTHR48109:SF4">
    <property type="entry name" value="DIHYDROOROTATE DEHYDROGENASE (QUINONE), MITOCHONDRIAL"/>
    <property type="match status" value="1"/>
</dbReference>
<dbReference type="PANTHER" id="PTHR48109">
    <property type="entry name" value="DIHYDROOROTATE DEHYDROGENASE (QUINONE), MITOCHONDRIAL-RELATED"/>
    <property type="match status" value="1"/>
</dbReference>
<dbReference type="Pfam" id="PF01180">
    <property type="entry name" value="DHO_dh"/>
    <property type="match status" value="1"/>
</dbReference>
<dbReference type="PIRSF" id="PIRSF000164">
    <property type="entry name" value="DHO_oxidase"/>
    <property type="match status" value="1"/>
</dbReference>
<dbReference type="SUPFAM" id="SSF51395">
    <property type="entry name" value="FMN-linked oxidoreductases"/>
    <property type="match status" value="1"/>
</dbReference>
<dbReference type="PROSITE" id="PS00911">
    <property type="entry name" value="DHODEHASE_1"/>
    <property type="match status" value="1"/>
</dbReference>
<dbReference type="PROSITE" id="PS00912">
    <property type="entry name" value="DHODEHASE_2"/>
    <property type="match status" value="1"/>
</dbReference>
<feature type="chain" id="PRO_0000336475" description="Dihydroorotate dehydrogenase (quinone)">
    <location>
        <begin position="1"/>
        <end position="354"/>
    </location>
</feature>
<feature type="active site" description="Nucleophile" evidence="1">
    <location>
        <position position="180"/>
    </location>
</feature>
<feature type="binding site" evidence="1">
    <location>
        <begin position="67"/>
        <end position="71"/>
    </location>
    <ligand>
        <name>FMN</name>
        <dbReference type="ChEBI" id="CHEBI:58210"/>
    </ligand>
</feature>
<feature type="binding site" evidence="1">
    <location>
        <position position="71"/>
    </location>
    <ligand>
        <name>substrate</name>
    </ligand>
</feature>
<feature type="binding site" evidence="1">
    <location>
        <position position="91"/>
    </location>
    <ligand>
        <name>FMN</name>
        <dbReference type="ChEBI" id="CHEBI:58210"/>
    </ligand>
</feature>
<feature type="binding site" evidence="1">
    <location>
        <begin position="116"/>
        <end position="120"/>
    </location>
    <ligand>
        <name>substrate</name>
    </ligand>
</feature>
<feature type="binding site" evidence="1">
    <location>
        <position position="144"/>
    </location>
    <ligand>
        <name>FMN</name>
        <dbReference type="ChEBI" id="CHEBI:58210"/>
    </ligand>
</feature>
<feature type="binding site" evidence="1">
    <location>
        <position position="177"/>
    </location>
    <ligand>
        <name>FMN</name>
        <dbReference type="ChEBI" id="CHEBI:58210"/>
    </ligand>
</feature>
<feature type="binding site" evidence="1">
    <location>
        <position position="177"/>
    </location>
    <ligand>
        <name>substrate</name>
    </ligand>
</feature>
<feature type="binding site" evidence="1">
    <location>
        <position position="182"/>
    </location>
    <ligand>
        <name>substrate</name>
    </ligand>
</feature>
<feature type="binding site" evidence="1">
    <location>
        <position position="213"/>
    </location>
    <ligand>
        <name>FMN</name>
        <dbReference type="ChEBI" id="CHEBI:58210"/>
    </ligand>
</feature>
<feature type="binding site" evidence="1">
    <location>
        <position position="241"/>
    </location>
    <ligand>
        <name>FMN</name>
        <dbReference type="ChEBI" id="CHEBI:58210"/>
    </ligand>
</feature>
<feature type="binding site" evidence="1">
    <location>
        <begin position="242"/>
        <end position="243"/>
    </location>
    <ligand>
        <name>substrate</name>
    </ligand>
</feature>
<feature type="binding site" evidence="1">
    <location>
        <position position="265"/>
    </location>
    <ligand>
        <name>FMN</name>
        <dbReference type="ChEBI" id="CHEBI:58210"/>
    </ligand>
</feature>
<feature type="binding site" evidence="1">
    <location>
        <position position="294"/>
    </location>
    <ligand>
        <name>FMN</name>
        <dbReference type="ChEBI" id="CHEBI:58210"/>
    </ligand>
</feature>
<feature type="binding site" evidence="1">
    <location>
        <begin position="315"/>
        <end position="316"/>
    </location>
    <ligand>
        <name>FMN</name>
        <dbReference type="ChEBI" id="CHEBI:58210"/>
    </ligand>
</feature>
<protein>
    <recommendedName>
        <fullName evidence="1">Dihydroorotate dehydrogenase (quinone)</fullName>
        <ecNumber evidence="1">1.3.5.2</ecNumber>
    </recommendedName>
    <alternativeName>
        <fullName evidence="1">DHOdehase</fullName>
        <shortName evidence="1">DHOD</shortName>
        <shortName evidence="1">DHODase</shortName>
    </alternativeName>
    <alternativeName>
        <fullName evidence="1">Dihydroorotate oxidase</fullName>
    </alternativeName>
</protein>
<evidence type="ECO:0000255" key="1">
    <source>
        <dbReference type="HAMAP-Rule" id="MF_00225"/>
    </source>
</evidence>
<evidence type="ECO:0000305" key="2"/>
<gene>
    <name evidence="1" type="primary">pyrD</name>
    <name type="ordered locus">MSMEG_4198</name>
    <name type="ordered locus">MSMEI_4100</name>
</gene>
<comment type="function">
    <text evidence="1">Catalyzes the conversion of dihydroorotate to orotate with quinone as electron acceptor.</text>
</comment>
<comment type="catalytic activity">
    <reaction evidence="1">
        <text>(S)-dihydroorotate + a quinone = orotate + a quinol</text>
        <dbReference type="Rhea" id="RHEA:30187"/>
        <dbReference type="ChEBI" id="CHEBI:24646"/>
        <dbReference type="ChEBI" id="CHEBI:30839"/>
        <dbReference type="ChEBI" id="CHEBI:30864"/>
        <dbReference type="ChEBI" id="CHEBI:132124"/>
        <dbReference type="EC" id="1.3.5.2"/>
    </reaction>
</comment>
<comment type="cofactor">
    <cofactor evidence="1">
        <name>FMN</name>
        <dbReference type="ChEBI" id="CHEBI:58210"/>
    </cofactor>
    <text evidence="1">Binds 1 FMN per subunit.</text>
</comment>
<comment type="pathway">
    <text evidence="1">Pyrimidine metabolism; UMP biosynthesis via de novo pathway; orotate from (S)-dihydroorotate (quinone route): step 1/1.</text>
</comment>
<comment type="subunit">
    <text evidence="1">Monomer.</text>
</comment>
<comment type="subcellular location">
    <subcellularLocation>
        <location evidence="1">Cell membrane</location>
        <topology evidence="1">Peripheral membrane protein</topology>
    </subcellularLocation>
</comment>
<comment type="similarity">
    <text evidence="1">Belongs to the dihydroorotate dehydrogenase family. Type 2 subfamily.</text>
</comment>
<comment type="sequence caution" evidence="2">
    <conflict type="erroneous initiation">
        <sequence resource="EMBL-CDS" id="AFP40558"/>
    </conflict>
    <text>Truncated N-terminus.</text>
</comment>